<feature type="initiator methionine" description="Removed" evidence="3">
    <location>
        <position position="1"/>
    </location>
</feature>
<feature type="chain" id="PRO_0000129528" description="Large ribosomal subunit protein uL2">
    <location>
        <begin position="2"/>
        <end position="276"/>
    </location>
</feature>
<feature type="region of interest" description="Disordered" evidence="2">
    <location>
        <begin position="224"/>
        <end position="276"/>
    </location>
</feature>
<feature type="compositionally biased region" description="Basic residues" evidence="2">
    <location>
        <begin position="258"/>
        <end position="276"/>
    </location>
</feature>
<feature type="sequence conflict" description="In Ref. 1; BAA31210." evidence="4" ref="1">
    <original>R</original>
    <variation>K</variation>
    <location>
        <position position="40"/>
    </location>
</feature>
<feature type="sequence conflict" description="In Ref. 1; BAA31210." evidence="4" ref="1">
    <original>A</original>
    <variation>R</variation>
    <location>
        <position position="106"/>
    </location>
</feature>
<feature type="sequence conflict" description="In Ref. 1; BAA31210." evidence="4" ref="1">
    <original>Q</original>
    <variation>L</variation>
    <location>
        <position position="163"/>
    </location>
</feature>
<feature type="strand" evidence="5">
    <location>
        <begin position="76"/>
        <end position="84"/>
    </location>
</feature>
<feature type="helix" evidence="5">
    <location>
        <begin position="85"/>
        <end position="87"/>
    </location>
</feature>
<feature type="strand" evidence="5">
    <location>
        <begin position="89"/>
        <end position="96"/>
    </location>
</feature>
<feature type="strand" evidence="5">
    <location>
        <begin position="101"/>
        <end position="105"/>
    </location>
</feature>
<feature type="strand" evidence="5">
    <location>
        <begin position="129"/>
        <end position="131"/>
    </location>
</feature>
<feature type="helix" evidence="5">
    <location>
        <begin position="132"/>
        <end position="134"/>
    </location>
</feature>
<feature type="strand" evidence="5">
    <location>
        <begin position="140"/>
        <end position="147"/>
    </location>
</feature>
<feature type="strand" evidence="5">
    <location>
        <begin position="152"/>
        <end position="159"/>
    </location>
</feature>
<feature type="strand" evidence="5">
    <location>
        <begin position="162"/>
        <end position="168"/>
    </location>
</feature>
<feature type="strand" evidence="5">
    <location>
        <begin position="171"/>
        <end position="175"/>
    </location>
</feature>
<feature type="strand" evidence="5">
    <location>
        <begin position="181"/>
        <end position="185"/>
    </location>
</feature>
<feature type="strand" evidence="5">
    <location>
        <begin position="188"/>
        <end position="193"/>
    </location>
</feature>
<comment type="function">
    <text evidence="1">One of the primary rRNA binding proteins. Required for association of the 30S and 50S subunits to form the 70S ribosome, for tRNA binding and peptide bond formation. It has been suggested to have peptidyltransferase activity; this is somewhat controversial. Makes several contacts with the 16S rRNA in the 70S ribosome.</text>
</comment>
<comment type="subunit">
    <text evidence="1">Part of the 50S ribosomal subunit. Forms a bridge to the 30S subunit in the 70S ribosome.</text>
</comment>
<comment type="similarity">
    <text evidence="1">Belongs to the universal ribosomal protein uL2 family.</text>
</comment>
<reference key="1">
    <citation type="submission" date="1998-06" db="EMBL/GenBank/DDBJ databases">
        <title>Nucleotide sequence of the genes encoding the ribosomal proteins L23 and L2 from the Bacillus stearothermophilus ribosome.</title>
        <authorList>
            <person name="Kimura M."/>
        </authorList>
    </citation>
    <scope>NUCLEOTIDE SEQUENCE [GENOMIC DNA]</scope>
</reference>
<reference key="2">
    <citation type="journal article" date="1990" name="Biol. Chem. Hoppe-Seyler">
        <title>Nucleotide sequences of Bacillus stearothermophilus ribosomal protein genes: part of the ribosomal S10 operon.</title>
        <authorList>
            <person name="Kroemer W.J."/>
            <person name="Hatakeyama T."/>
            <person name="Kimura M."/>
        </authorList>
    </citation>
    <scope>NUCLEOTIDE SEQUENCE [GENOMIC DNA] OF 81-276</scope>
    <source>
        <strain>ATCC 29609 / DSM 2027 / NCA 1503 / NCIMB 8924</strain>
    </source>
</reference>
<reference key="3">
    <citation type="journal article" date="1985" name="Eur. J. Biochem.">
        <title>The primary structure of ribosomal protein L2 from Bacillus stearothermophilus.</title>
        <authorList>
            <person name="Kimura M."/>
            <person name="Kimura J."/>
            <person name="Watanabe K."/>
        </authorList>
    </citation>
    <scope>PROTEIN SEQUENCE OF 2-276</scope>
</reference>
<reference key="4">
    <citation type="journal article" date="1995" name="EMBO J.">
        <title>Protein-rRNA binding features and their structural and functional implications in ribosomes as determined by cross-linking studies.</title>
        <authorList>
            <person name="Urlaub H."/>
            <person name="Kruft V."/>
            <person name="Bischof O."/>
            <person name="Mueller E.-C."/>
            <person name="Wittmann-Liebold B."/>
        </authorList>
    </citation>
    <scope>PROTEIN SEQUENCE OF 239-247</scope>
    <scope>CROSS-LINKING TO RRNA</scope>
    <source>
        <strain>799</strain>
    </source>
</reference>
<reference key="5">
    <citation type="journal article" date="1999" name="EMBO J.">
        <title>The three-dimensional structure of the RNA-binding domain of ribosomal protein L2; a protein at the peptidyl transferase center of the ribosome.</title>
        <authorList>
            <person name="Nakagawa A."/>
            <person name="Nakashima T."/>
            <person name="Taniguchi M."/>
            <person name="Hosaka H."/>
            <person name="Kimura M."/>
            <person name="Tanaka I."/>
        </authorList>
    </citation>
    <scope>X-RAY CRYSTALLOGRAPHY (2.3 ANGSTROMS) OF 61-202</scope>
</reference>
<reference key="6">
    <citation type="journal article" date="1999" name="Nature">
        <title>Placement of protein and RNA structures into a 5 A-resolution map of the 50S ribosomal subunit.</title>
        <authorList>
            <person name="Ban N."/>
            <person name="Nissen P."/>
            <person name="Hansen J."/>
            <person name="Capel M."/>
            <person name="Moore P.B."/>
            <person name="Steitz T.A."/>
        </authorList>
    </citation>
    <scope>3D-STRUCTURE MODELING OF 62-197 ONTO THE H.MARISMORTUI 50S RIBOSOME</scope>
</reference>
<dbReference type="EMBL" id="AB015722">
    <property type="protein sequence ID" value="BAA31210.1"/>
    <property type="molecule type" value="Genomic_DNA"/>
</dbReference>
<dbReference type="EMBL" id="X54994">
    <property type="protein sequence ID" value="CAA38737.1"/>
    <property type="molecule type" value="Genomic_DNA"/>
</dbReference>
<dbReference type="PIR" id="A02759">
    <property type="entry name" value="R5BS2F"/>
</dbReference>
<dbReference type="PDB" id="1ML5">
    <property type="method" value="EM"/>
    <property type="resolution" value="14.00 A"/>
    <property type="chains" value="d=61-233"/>
</dbReference>
<dbReference type="PDB" id="1RL2">
    <property type="method" value="X-ray"/>
    <property type="resolution" value="2.30 A"/>
    <property type="chains" value="A/B=61-197"/>
</dbReference>
<dbReference type="PDB" id="4V42">
    <property type="method" value="X-ray"/>
    <property type="resolution" value="5.50 A"/>
    <property type="chains" value="BD=61-197"/>
</dbReference>
<dbReference type="PDB" id="4V4R">
    <property type="method" value="X-ray"/>
    <property type="resolution" value="5.90 A"/>
    <property type="chains" value="D=61-197"/>
</dbReference>
<dbReference type="PDB" id="4V4S">
    <property type="method" value="X-ray"/>
    <property type="resolution" value="6.76 A"/>
    <property type="chains" value="D=61-197"/>
</dbReference>
<dbReference type="PDB" id="4V4T">
    <property type="method" value="X-ray"/>
    <property type="resolution" value="6.46 A"/>
    <property type="chains" value="D=61-197"/>
</dbReference>
<dbReference type="PDBsum" id="1ML5"/>
<dbReference type="PDBsum" id="1RL2"/>
<dbReference type="PDBsum" id="4V42"/>
<dbReference type="PDBsum" id="4V4R"/>
<dbReference type="PDBsum" id="4V4S"/>
<dbReference type="PDBsum" id="4V4T"/>
<dbReference type="SMR" id="P04257"/>
<dbReference type="EvolutionaryTrace" id="P04257"/>
<dbReference type="GO" id="GO:0015934">
    <property type="term" value="C:large ribosomal subunit"/>
    <property type="evidence" value="ECO:0007669"/>
    <property type="project" value="InterPro"/>
</dbReference>
<dbReference type="GO" id="GO:0019843">
    <property type="term" value="F:rRNA binding"/>
    <property type="evidence" value="ECO:0007669"/>
    <property type="project" value="UniProtKB-UniRule"/>
</dbReference>
<dbReference type="GO" id="GO:0003735">
    <property type="term" value="F:structural constituent of ribosome"/>
    <property type="evidence" value="ECO:0007669"/>
    <property type="project" value="InterPro"/>
</dbReference>
<dbReference type="GO" id="GO:0016740">
    <property type="term" value="F:transferase activity"/>
    <property type="evidence" value="ECO:0007669"/>
    <property type="project" value="InterPro"/>
</dbReference>
<dbReference type="GO" id="GO:0002181">
    <property type="term" value="P:cytoplasmic translation"/>
    <property type="evidence" value="ECO:0007669"/>
    <property type="project" value="TreeGrafter"/>
</dbReference>
<dbReference type="FunFam" id="2.30.30.30:FF:000001">
    <property type="entry name" value="50S ribosomal protein L2"/>
    <property type="match status" value="1"/>
</dbReference>
<dbReference type="FunFam" id="2.40.50.140:FF:000003">
    <property type="entry name" value="50S ribosomal protein L2"/>
    <property type="match status" value="1"/>
</dbReference>
<dbReference type="FunFam" id="4.10.950.10:FF:000001">
    <property type="entry name" value="50S ribosomal protein L2"/>
    <property type="match status" value="1"/>
</dbReference>
<dbReference type="Gene3D" id="2.30.30.30">
    <property type="match status" value="1"/>
</dbReference>
<dbReference type="Gene3D" id="2.40.50.140">
    <property type="entry name" value="Nucleic acid-binding proteins"/>
    <property type="match status" value="1"/>
</dbReference>
<dbReference type="Gene3D" id="4.10.950.10">
    <property type="entry name" value="Ribosomal protein L2, domain 3"/>
    <property type="match status" value="1"/>
</dbReference>
<dbReference type="HAMAP" id="MF_01320_B">
    <property type="entry name" value="Ribosomal_uL2_B"/>
    <property type="match status" value="1"/>
</dbReference>
<dbReference type="InterPro" id="IPR012340">
    <property type="entry name" value="NA-bd_OB-fold"/>
</dbReference>
<dbReference type="InterPro" id="IPR014722">
    <property type="entry name" value="Rib_uL2_dom2"/>
</dbReference>
<dbReference type="InterPro" id="IPR002171">
    <property type="entry name" value="Ribosomal_uL2"/>
</dbReference>
<dbReference type="InterPro" id="IPR005880">
    <property type="entry name" value="Ribosomal_uL2_bac/org-type"/>
</dbReference>
<dbReference type="InterPro" id="IPR022669">
    <property type="entry name" value="Ribosomal_uL2_C"/>
</dbReference>
<dbReference type="InterPro" id="IPR022671">
    <property type="entry name" value="Ribosomal_uL2_CS"/>
</dbReference>
<dbReference type="InterPro" id="IPR014726">
    <property type="entry name" value="Ribosomal_uL2_dom3"/>
</dbReference>
<dbReference type="InterPro" id="IPR022666">
    <property type="entry name" value="Ribosomal_uL2_RNA-bd_dom"/>
</dbReference>
<dbReference type="InterPro" id="IPR008991">
    <property type="entry name" value="Translation_prot_SH3-like_sf"/>
</dbReference>
<dbReference type="NCBIfam" id="TIGR01171">
    <property type="entry name" value="rplB_bact"/>
    <property type="match status" value="1"/>
</dbReference>
<dbReference type="PANTHER" id="PTHR13691:SF5">
    <property type="entry name" value="LARGE RIBOSOMAL SUBUNIT PROTEIN UL2M"/>
    <property type="match status" value="1"/>
</dbReference>
<dbReference type="PANTHER" id="PTHR13691">
    <property type="entry name" value="RIBOSOMAL PROTEIN L2"/>
    <property type="match status" value="1"/>
</dbReference>
<dbReference type="Pfam" id="PF00181">
    <property type="entry name" value="Ribosomal_L2"/>
    <property type="match status" value="1"/>
</dbReference>
<dbReference type="Pfam" id="PF03947">
    <property type="entry name" value="Ribosomal_L2_C"/>
    <property type="match status" value="1"/>
</dbReference>
<dbReference type="PIRSF" id="PIRSF002158">
    <property type="entry name" value="Ribosomal_L2"/>
    <property type="match status" value="1"/>
</dbReference>
<dbReference type="SMART" id="SM01383">
    <property type="entry name" value="Ribosomal_L2"/>
    <property type="match status" value="1"/>
</dbReference>
<dbReference type="SMART" id="SM01382">
    <property type="entry name" value="Ribosomal_L2_C"/>
    <property type="match status" value="1"/>
</dbReference>
<dbReference type="SUPFAM" id="SSF50249">
    <property type="entry name" value="Nucleic acid-binding proteins"/>
    <property type="match status" value="1"/>
</dbReference>
<dbReference type="SUPFAM" id="SSF50104">
    <property type="entry name" value="Translation proteins SH3-like domain"/>
    <property type="match status" value="1"/>
</dbReference>
<dbReference type="PROSITE" id="PS00467">
    <property type="entry name" value="RIBOSOMAL_L2"/>
    <property type="match status" value="1"/>
</dbReference>
<gene>
    <name evidence="1" type="primary">rplB</name>
</gene>
<organism>
    <name type="scientific">Geobacillus stearothermophilus</name>
    <name type="common">Bacillus stearothermophilus</name>
    <dbReference type="NCBI Taxonomy" id="1422"/>
    <lineage>
        <taxon>Bacteria</taxon>
        <taxon>Bacillati</taxon>
        <taxon>Bacillota</taxon>
        <taxon>Bacilli</taxon>
        <taxon>Bacillales</taxon>
        <taxon>Anoxybacillaceae</taxon>
        <taxon>Geobacillus</taxon>
    </lineage>
</organism>
<name>RL2_GEOSE</name>
<proteinExistence type="evidence at protein level"/>
<evidence type="ECO:0000255" key="1">
    <source>
        <dbReference type="HAMAP-Rule" id="MF_01320"/>
    </source>
</evidence>
<evidence type="ECO:0000256" key="2">
    <source>
        <dbReference type="SAM" id="MobiDB-lite"/>
    </source>
</evidence>
<evidence type="ECO:0000269" key="3">
    <source>
    </source>
</evidence>
<evidence type="ECO:0000305" key="4"/>
<evidence type="ECO:0007829" key="5">
    <source>
        <dbReference type="PDB" id="1RL2"/>
    </source>
</evidence>
<sequence>MAIKKYKPTSNGRRGMTVLDFSEITTDQPEKSLLAPLKKRAGRNNQGKITVRHQGGGHKRQYRIIDFKRDKDGIPGRVATIEYDPNRSANIALINYADGEKRYIIAPKNLKVGMEIMSGPDADIKIGNALPLENIPVGTLVHNIELKPGRGGQLVRAAGTSAQVLGKEGKYVIVRLASGEVRMILGKCRATVGEVGNEQHELVNIGKAGRARWLGIRPTVRGSVMNPVDHPHGGGEGKAPIGRKSPMTPWGKPTLGYKTRKKKNKSDKFIIRRRKK</sequence>
<protein>
    <recommendedName>
        <fullName evidence="1">Large ribosomal subunit protein uL2</fullName>
    </recommendedName>
    <alternativeName>
        <fullName evidence="4">50S ribosomal protein L2</fullName>
        <shortName>BstL2</shortName>
    </alternativeName>
    <alternativeName>
        <fullName>L3</fullName>
    </alternativeName>
</protein>
<accession>P04257</accession>
<accession>O82995</accession>
<keyword id="KW-0002">3D-structure</keyword>
<keyword id="KW-0903">Direct protein sequencing</keyword>
<keyword id="KW-0687">Ribonucleoprotein</keyword>
<keyword id="KW-0689">Ribosomal protein</keyword>
<keyword id="KW-0694">RNA-binding</keyword>
<keyword id="KW-0699">rRNA-binding</keyword>